<comment type="function">
    <text evidence="1">Catalyzes the complicated ring closure reaction between the two acyclic compounds 1-deoxy-D-xylulose-5-phosphate (DXP) and 3-amino-2-oxopropyl phosphate (1-amino-acetone-3-phosphate or AAP) to form pyridoxine 5'-phosphate (PNP) and inorganic phosphate.</text>
</comment>
<comment type="catalytic activity">
    <reaction evidence="1">
        <text>3-amino-2-oxopropyl phosphate + 1-deoxy-D-xylulose 5-phosphate = pyridoxine 5'-phosphate + phosphate + 2 H2O + H(+)</text>
        <dbReference type="Rhea" id="RHEA:15265"/>
        <dbReference type="ChEBI" id="CHEBI:15377"/>
        <dbReference type="ChEBI" id="CHEBI:15378"/>
        <dbReference type="ChEBI" id="CHEBI:43474"/>
        <dbReference type="ChEBI" id="CHEBI:57279"/>
        <dbReference type="ChEBI" id="CHEBI:57792"/>
        <dbReference type="ChEBI" id="CHEBI:58589"/>
        <dbReference type="EC" id="2.6.99.2"/>
    </reaction>
</comment>
<comment type="pathway">
    <text evidence="1">Cofactor biosynthesis; pyridoxine 5'-phosphate biosynthesis; pyridoxine 5'-phosphate from D-erythrose 4-phosphate: step 5/5.</text>
</comment>
<comment type="subunit">
    <text evidence="1">Homooctamer; tetramer of dimers.</text>
</comment>
<comment type="subcellular location">
    <subcellularLocation>
        <location evidence="1">Cytoplasm</location>
    </subcellularLocation>
</comment>
<comment type="similarity">
    <text evidence="1">Belongs to the PNP synthase family.</text>
</comment>
<evidence type="ECO:0000255" key="1">
    <source>
        <dbReference type="HAMAP-Rule" id="MF_00279"/>
    </source>
</evidence>
<keyword id="KW-0963">Cytoplasm</keyword>
<keyword id="KW-0664">Pyridoxine biosynthesis</keyword>
<keyword id="KW-0808">Transferase</keyword>
<dbReference type="EC" id="2.6.99.2" evidence="1"/>
<dbReference type="EMBL" id="AM181176">
    <property type="protein sequence ID" value="CAY47327.1"/>
    <property type="molecule type" value="Genomic_DNA"/>
</dbReference>
<dbReference type="RefSeq" id="WP_012722404.1">
    <property type="nucleotide sequence ID" value="NC_012660.1"/>
</dbReference>
<dbReference type="SMR" id="C3K6Z0"/>
<dbReference type="STRING" id="294.SRM1_01042"/>
<dbReference type="GeneID" id="93462684"/>
<dbReference type="PATRIC" id="fig|216595.4.peg.1297"/>
<dbReference type="eggNOG" id="COG0854">
    <property type="taxonomic scope" value="Bacteria"/>
</dbReference>
<dbReference type="HOGENOM" id="CLU_074563_0_0_6"/>
<dbReference type="OrthoDB" id="9806590at2"/>
<dbReference type="UniPathway" id="UPA00244">
    <property type="reaction ID" value="UER00313"/>
</dbReference>
<dbReference type="GO" id="GO:0005829">
    <property type="term" value="C:cytosol"/>
    <property type="evidence" value="ECO:0007669"/>
    <property type="project" value="TreeGrafter"/>
</dbReference>
<dbReference type="GO" id="GO:0033856">
    <property type="term" value="F:pyridoxine 5'-phosphate synthase activity"/>
    <property type="evidence" value="ECO:0007669"/>
    <property type="project" value="UniProtKB-EC"/>
</dbReference>
<dbReference type="GO" id="GO:0008615">
    <property type="term" value="P:pyridoxine biosynthetic process"/>
    <property type="evidence" value="ECO:0007669"/>
    <property type="project" value="UniProtKB-UniRule"/>
</dbReference>
<dbReference type="CDD" id="cd00003">
    <property type="entry name" value="PNPsynthase"/>
    <property type="match status" value="1"/>
</dbReference>
<dbReference type="FunFam" id="3.20.20.70:FF:000042">
    <property type="entry name" value="Pyridoxine 5'-phosphate synthase"/>
    <property type="match status" value="1"/>
</dbReference>
<dbReference type="Gene3D" id="3.20.20.70">
    <property type="entry name" value="Aldolase class I"/>
    <property type="match status" value="1"/>
</dbReference>
<dbReference type="HAMAP" id="MF_00279">
    <property type="entry name" value="PdxJ"/>
    <property type="match status" value="1"/>
</dbReference>
<dbReference type="InterPro" id="IPR013785">
    <property type="entry name" value="Aldolase_TIM"/>
</dbReference>
<dbReference type="InterPro" id="IPR004569">
    <property type="entry name" value="PyrdxlP_synth_PdxJ"/>
</dbReference>
<dbReference type="InterPro" id="IPR036130">
    <property type="entry name" value="Pyridoxine-5'_phos_synth"/>
</dbReference>
<dbReference type="NCBIfam" id="TIGR00559">
    <property type="entry name" value="pdxJ"/>
    <property type="match status" value="1"/>
</dbReference>
<dbReference type="NCBIfam" id="NF003623">
    <property type="entry name" value="PRK05265.1-1"/>
    <property type="match status" value="1"/>
</dbReference>
<dbReference type="NCBIfam" id="NF003625">
    <property type="entry name" value="PRK05265.1-3"/>
    <property type="match status" value="1"/>
</dbReference>
<dbReference type="NCBIfam" id="NF003627">
    <property type="entry name" value="PRK05265.1-5"/>
    <property type="match status" value="1"/>
</dbReference>
<dbReference type="PANTHER" id="PTHR30456">
    <property type="entry name" value="PYRIDOXINE 5'-PHOSPHATE SYNTHASE"/>
    <property type="match status" value="1"/>
</dbReference>
<dbReference type="PANTHER" id="PTHR30456:SF0">
    <property type="entry name" value="PYRIDOXINE 5'-PHOSPHATE SYNTHASE"/>
    <property type="match status" value="1"/>
</dbReference>
<dbReference type="Pfam" id="PF03740">
    <property type="entry name" value="PdxJ"/>
    <property type="match status" value="1"/>
</dbReference>
<dbReference type="SUPFAM" id="SSF63892">
    <property type="entry name" value="Pyridoxine 5'-phosphate synthase"/>
    <property type="match status" value="1"/>
</dbReference>
<proteinExistence type="inferred from homology"/>
<protein>
    <recommendedName>
        <fullName evidence="1">Pyridoxine 5'-phosphate synthase</fullName>
        <shortName evidence="1">PNP synthase</shortName>
        <ecNumber evidence="1">2.6.99.2</ecNumber>
    </recommendedName>
</protein>
<sequence length="247" mass="26775">MSTSNRILLGVNIDHVATLRQARGTRYPDPVKAALDAEEAGADGITVHLREDRRHIQERDVLLLKDVLQTRMNFEMGVTEEMMAFAERIRPAHICLVPETRQELTTEGGLDVAGQEARIKAAVERLSKIGSEVSLFIDADERQIEASRRVGAPAIELHTGRYADATTPTEVADELQRIIDGVNCGLNEGLIVNAGHGLHYHNVEAVAAIKGINELNIGHALVAHALFVGFKGAVAEMKALILAAAKA</sequence>
<accession>C3K6Z0</accession>
<organism>
    <name type="scientific">Pseudomonas fluorescens (strain SBW25)</name>
    <dbReference type="NCBI Taxonomy" id="216595"/>
    <lineage>
        <taxon>Bacteria</taxon>
        <taxon>Pseudomonadati</taxon>
        <taxon>Pseudomonadota</taxon>
        <taxon>Gammaproteobacteria</taxon>
        <taxon>Pseudomonadales</taxon>
        <taxon>Pseudomonadaceae</taxon>
        <taxon>Pseudomonas</taxon>
    </lineage>
</organism>
<feature type="chain" id="PRO_1000204811" description="Pyridoxine 5'-phosphate synthase">
    <location>
        <begin position="1"/>
        <end position="247"/>
    </location>
</feature>
<feature type="active site" description="Proton acceptor" evidence="1">
    <location>
        <position position="48"/>
    </location>
</feature>
<feature type="active site" description="Proton acceptor" evidence="1">
    <location>
        <position position="75"/>
    </location>
</feature>
<feature type="active site" description="Proton donor" evidence="1">
    <location>
        <position position="196"/>
    </location>
</feature>
<feature type="binding site" evidence="1">
    <location>
        <position position="12"/>
    </location>
    <ligand>
        <name>3-amino-2-oxopropyl phosphate</name>
        <dbReference type="ChEBI" id="CHEBI:57279"/>
    </ligand>
</feature>
<feature type="binding site" evidence="1">
    <location>
        <begin position="14"/>
        <end position="15"/>
    </location>
    <ligand>
        <name>1-deoxy-D-xylulose 5-phosphate</name>
        <dbReference type="ChEBI" id="CHEBI:57792"/>
    </ligand>
</feature>
<feature type="binding site" evidence="1">
    <location>
        <position position="23"/>
    </location>
    <ligand>
        <name>3-amino-2-oxopropyl phosphate</name>
        <dbReference type="ChEBI" id="CHEBI:57279"/>
    </ligand>
</feature>
<feature type="binding site" evidence="1">
    <location>
        <position position="50"/>
    </location>
    <ligand>
        <name>1-deoxy-D-xylulose 5-phosphate</name>
        <dbReference type="ChEBI" id="CHEBI:57792"/>
    </ligand>
</feature>
<feature type="binding site" evidence="1">
    <location>
        <position position="55"/>
    </location>
    <ligand>
        <name>1-deoxy-D-xylulose 5-phosphate</name>
        <dbReference type="ChEBI" id="CHEBI:57792"/>
    </ligand>
</feature>
<feature type="binding site" evidence="1">
    <location>
        <position position="105"/>
    </location>
    <ligand>
        <name>1-deoxy-D-xylulose 5-phosphate</name>
        <dbReference type="ChEBI" id="CHEBI:57792"/>
    </ligand>
</feature>
<feature type="binding site" evidence="1">
    <location>
        <position position="197"/>
    </location>
    <ligand>
        <name>3-amino-2-oxopropyl phosphate</name>
        <dbReference type="ChEBI" id="CHEBI:57279"/>
    </ligand>
</feature>
<feature type="binding site" evidence="1">
    <location>
        <begin position="218"/>
        <end position="219"/>
    </location>
    <ligand>
        <name>3-amino-2-oxopropyl phosphate</name>
        <dbReference type="ChEBI" id="CHEBI:57279"/>
    </ligand>
</feature>
<feature type="site" description="Transition state stabilizer" evidence="1">
    <location>
        <position position="156"/>
    </location>
</feature>
<reference key="1">
    <citation type="journal article" date="2009" name="Genome Biol.">
        <title>Genomic and genetic analyses of diversity and plant interactions of Pseudomonas fluorescens.</title>
        <authorList>
            <person name="Silby M.W."/>
            <person name="Cerdeno-Tarraga A.M."/>
            <person name="Vernikos G.S."/>
            <person name="Giddens S.R."/>
            <person name="Jackson R.W."/>
            <person name="Preston G.M."/>
            <person name="Zhang X.-X."/>
            <person name="Moon C.D."/>
            <person name="Gehrig S.M."/>
            <person name="Godfrey S.A.C."/>
            <person name="Knight C.G."/>
            <person name="Malone J.G."/>
            <person name="Robinson Z."/>
            <person name="Spiers A.J."/>
            <person name="Harris S."/>
            <person name="Challis G.L."/>
            <person name="Yaxley A.M."/>
            <person name="Harris D."/>
            <person name="Seeger K."/>
            <person name="Murphy L."/>
            <person name="Rutter S."/>
            <person name="Squares R."/>
            <person name="Quail M.A."/>
            <person name="Saunders E."/>
            <person name="Mavromatis K."/>
            <person name="Brettin T.S."/>
            <person name="Bentley S.D."/>
            <person name="Hothersall J."/>
            <person name="Stephens E."/>
            <person name="Thomas C.M."/>
            <person name="Parkhill J."/>
            <person name="Levy S.B."/>
            <person name="Rainey P.B."/>
            <person name="Thomson N.R."/>
        </authorList>
    </citation>
    <scope>NUCLEOTIDE SEQUENCE [LARGE SCALE GENOMIC DNA]</scope>
    <source>
        <strain>SBW25</strain>
    </source>
</reference>
<gene>
    <name evidence="1" type="primary">pdxJ</name>
    <name type="ordered locus">PFLU_1063</name>
</gene>
<name>PDXJ_PSEFS</name>